<sequence length="306" mass="32719">MLIKAYSSSANLGAGFDILALAHNAFEDSVEMEAIPNSTLQVLVTGDGVPNEVDKNSASYAVYRLLSELDVKVKVKMKVIKGIPAGLGLGSSGASAVAAVVGVNNLLKLGLDKQELVRASMIGEIASSGSAHPDNVAASVYGGVVAVLNTEPVTVSPIPVNLNFSLLLFIPVLQLKDKTKKAREMLPRNVELGKMVRNSRYLSSTILGLVKGDRELLRLGLNDEIVEVARSPLFPHYEKLKKISIENNAIGACVSGAGPTIAVFVDEYSDKNKIKKEGLEICETYSQKCLVKEAKIAGGAWVERWN</sequence>
<dbReference type="EC" id="2.7.1.39" evidence="1"/>
<dbReference type="EMBL" id="CP000077">
    <property type="protein sequence ID" value="AAY80334.1"/>
    <property type="molecule type" value="Genomic_DNA"/>
</dbReference>
<dbReference type="RefSeq" id="WP_011277836.1">
    <property type="nucleotide sequence ID" value="NC_007181.1"/>
</dbReference>
<dbReference type="SMR" id="Q4JA46"/>
<dbReference type="STRING" id="330779.Saci_0972"/>
<dbReference type="GeneID" id="14551483"/>
<dbReference type="KEGG" id="sai:Saci_0972"/>
<dbReference type="PATRIC" id="fig|330779.12.peg.933"/>
<dbReference type="eggNOG" id="arCOG01027">
    <property type="taxonomic scope" value="Archaea"/>
</dbReference>
<dbReference type="HOGENOM" id="CLU_041243_1_1_2"/>
<dbReference type="UniPathway" id="UPA00050">
    <property type="reaction ID" value="UER00064"/>
</dbReference>
<dbReference type="Proteomes" id="UP000001018">
    <property type="component" value="Chromosome"/>
</dbReference>
<dbReference type="GO" id="GO:0005737">
    <property type="term" value="C:cytoplasm"/>
    <property type="evidence" value="ECO:0007669"/>
    <property type="project" value="UniProtKB-SubCell"/>
</dbReference>
<dbReference type="GO" id="GO:0005524">
    <property type="term" value="F:ATP binding"/>
    <property type="evidence" value="ECO:0007669"/>
    <property type="project" value="UniProtKB-UniRule"/>
</dbReference>
<dbReference type="GO" id="GO:0004413">
    <property type="term" value="F:homoserine kinase activity"/>
    <property type="evidence" value="ECO:0007669"/>
    <property type="project" value="UniProtKB-UniRule"/>
</dbReference>
<dbReference type="GO" id="GO:0009088">
    <property type="term" value="P:threonine biosynthetic process"/>
    <property type="evidence" value="ECO:0007669"/>
    <property type="project" value="UniProtKB-UniRule"/>
</dbReference>
<dbReference type="Gene3D" id="3.30.230.10">
    <property type="match status" value="1"/>
</dbReference>
<dbReference type="Gene3D" id="3.30.70.890">
    <property type="entry name" value="GHMP kinase, C-terminal domain"/>
    <property type="match status" value="1"/>
</dbReference>
<dbReference type="HAMAP" id="MF_00384">
    <property type="entry name" value="Homoser_kinase"/>
    <property type="match status" value="1"/>
</dbReference>
<dbReference type="InterPro" id="IPR013750">
    <property type="entry name" value="GHMP_kinase_C_dom"/>
</dbReference>
<dbReference type="InterPro" id="IPR036554">
    <property type="entry name" value="GHMP_kinase_C_sf"/>
</dbReference>
<dbReference type="InterPro" id="IPR006204">
    <property type="entry name" value="GHMP_kinase_N_dom"/>
</dbReference>
<dbReference type="InterPro" id="IPR006203">
    <property type="entry name" value="GHMP_knse_ATP-bd_CS"/>
</dbReference>
<dbReference type="InterPro" id="IPR000870">
    <property type="entry name" value="Homoserine_kinase"/>
</dbReference>
<dbReference type="InterPro" id="IPR020568">
    <property type="entry name" value="Ribosomal_Su5_D2-typ_SF"/>
</dbReference>
<dbReference type="InterPro" id="IPR014721">
    <property type="entry name" value="Ribsml_uS5_D2-typ_fold_subgr"/>
</dbReference>
<dbReference type="NCBIfam" id="NF002288">
    <property type="entry name" value="PRK01212.1-4"/>
    <property type="match status" value="1"/>
</dbReference>
<dbReference type="NCBIfam" id="TIGR00191">
    <property type="entry name" value="thrB"/>
    <property type="match status" value="1"/>
</dbReference>
<dbReference type="PANTHER" id="PTHR20861:SF1">
    <property type="entry name" value="HOMOSERINE KINASE"/>
    <property type="match status" value="1"/>
</dbReference>
<dbReference type="PANTHER" id="PTHR20861">
    <property type="entry name" value="HOMOSERINE/4-DIPHOSPHOCYTIDYL-2-C-METHYL-D-ERYTHRITOL KINASE"/>
    <property type="match status" value="1"/>
</dbReference>
<dbReference type="Pfam" id="PF08544">
    <property type="entry name" value="GHMP_kinases_C"/>
    <property type="match status" value="1"/>
</dbReference>
<dbReference type="Pfam" id="PF00288">
    <property type="entry name" value="GHMP_kinases_N"/>
    <property type="match status" value="1"/>
</dbReference>
<dbReference type="PIRSF" id="PIRSF000676">
    <property type="entry name" value="Homoser_kin"/>
    <property type="match status" value="1"/>
</dbReference>
<dbReference type="PRINTS" id="PR00958">
    <property type="entry name" value="HOMSERKINASE"/>
</dbReference>
<dbReference type="SUPFAM" id="SSF55060">
    <property type="entry name" value="GHMP Kinase, C-terminal domain"/>
    <property type="match status" value="1"/>
</dbReference>
<dbReference type="SUPFAM" id="SSF54211">
    <property type="entry name" value="Ribosomal protein S5 domain 2-like"/>
    <property type="match status" value="1"/>
</dbReference>
<dbReference type="PROSITE" id="PS00627">
    <property type="entry name" value="GHMP_KINASES_ATP"/>
    <property type="match status" value="1"/>
</dbReference>
<keyword id="KW-0028">Amino-acid biosynthesis</keyword>
<keyword id="KW-0067">ATP-binding</keyword>
<keyword id="KW-0963">Cytoplasm</keyword>
<keyword id="KW-0418">Kinase</keyword>
<keyword id="KW-0547">Nucleotide-binding</keyword>
<keyword id="KW-1185">Reference proteome</keyword>
<keyword id="KW-0791">Threonine biosynthesis</keyword>
<keyword id="KW-0808">Transferase</keyword>
<protein>
    <recommendedName>
        <fullName evidence="1">Homoserine kinase</fullName>
        <shortName evidence="1">HK</shortName>
        <shortName evidence="1">HSK</shortName>
        <ecNumber evidence="1">2.7.1.39</ecNumber>
    </recommendedName>
</protein>
<name>KHSE_SULAC</name>
<comment type="function">
    <text evidence="1">Catalyzes the ATP-dependent phosphorylation of L-homoserine to L-homoserine phosphate.</text>
</comment>
<comment type="catalytic activity">
    <reaction evidence="1">
        <text>L-homoserine + ATP = O-phospho-L-homoserine + ADP + H(+)</text>
        <dbReference type="Rhea" id="RHEA:13985"/>
        <dbReference type="ChEBI" id="CHEBI:15378"/>
        <dbReference type="ChEBI" id="CHEBI:30616"/>
        <dbReference type="ChEBI" id="CHEBI:57476"/>
        <dbReference type="ChEBI" id="CHEBI:57590"/>
        <dbReference type="ChEBI" id="CHEBI:456216"/>
        <dbReference type="EC" id="2.7.1.39"/>
    </reaction>
</comment>
<comment type="pathway">
    <text evidence="1">Amino-acid biosynthesis; L-threonine biosynthesis; L-threonine from L-aspartate: step 4/5.</text>
</comment>
<comment type="subcellular location">
    <subcellularLocation>
        <location evidence="1">Cytoplasm</location>
    </subcellularLocation>
</comment>
<comment type="similarity">
    <text evidence="1">Belongs to the GHMP kinase family. Homoserine kinase subfamily.</text>
</comment>
<feature type="chain" id="PRO_0000156649" description="Homoserine kinase">
    <location>
        <begin position="1"/>
        <end position="306"/>
    </location>
</feature>
<feature type="binding site" evidence="1">
    <location>
        <begin position="84"/>
        <end position="94"/>
    </location>
    <ligand>
        <name>ATP</name>
        <dbReference type="ChEBI" id="CHEBI:30616"/>
    </ligand>
</feature>
<proteinExistence type="inferred from homology"/>
<reference key="1">
    <citation type="journal article" date="2005" name="J. Bacteriol.">
        <title>The genome of Sulfolobus acidocaldarius, a model organism of the Crenarchaeota.</title>
        <authorList>
            <person name="Chen L."/>
            <person name="Bruegger K."/>
            <person name="Skovgaard M."/>
            <person name="Redder P."/>
            <person name="She Q."/>
            <person name="Torarinsson E."/>
            <person name="Greve B."/>
            <person name="Awayez M."/>
            <person name="Zibat A."/>
            <person name="Klenk H.-P."/>
            <person name="Garrett R.A."/>
        </authorList>
    </citation>
    <scope>NUCLEOTIDE SEQUENCE [LARGE SCALE GENOMIC DNA]</scope>
    <source>
        <strain>ATCC 33909 / DSM 639 / JCM 8929 / NBRC 15157 / NCIMB 11770</strain>
    </source>
</reference>
<gene>
    <name evidence="1" type="primary">thrB</name>
    <name type="ordered locus">Saci_0972</name>
</gene>
<evidence type="ECO:0000255" key="1">
    <source>
        <dbReference type="HAMAP-Rule" id="MF_00384"/>
    </source>
</evidence>
<accession>Q4JA46</accession>
<organism>
    <name type="scientific">Sulfolobus acidocaldarius (strain ATCC 33909 / DSM 639 / JCM 8929 / NBRC 15157 / NCIMB 11770)</name>
    <dbReference type="NCBI Taxonomy" id="330779"/>
    <lineage>
        <taxon>Archaea</taxon>
        <taxon>Thermoproteota</taxon>
        <taxon>Thermoprotei</taxon>
        <taxon>Sulfolobales</taxon>
        <taxon>Sulfolobaceae</taxon>
        <taxon>Sulfolobus</taxon>
    </lineage>
</organism>